<organism>
    <name type="scientific">Xenopus laevis</name>
    <name type="common">African clawed frog</name>
    <dbReference type="NCBI Taxonomy" id="8355"/>
    <lineage>
        <taxon>Eukaryota</taxon>
        <taxon>Metazoa</taxon>
        <taxon>Chordata</taxon>
        <taxon>Craniata</taxon>
        <taxon>Vertebrata</taxon>
        <taxon>Euteleostomi</taxon>
        <taxon>Amphibia</taxon>
        <taxon>Batrachia</taxon>
        <taxon>Anura</taxon>
        <taxon>Pipoidea</taxon>
        <taxon>Pipidae</taxon>
        <taxon>Xenopodinae</taxon>
        <taxon>Xenopus</taxon>
        <taxon>Xenopus</taxon>
    </lineage>
</organism>
<sequence length="722" mass="82068">MTKLTTELLLKKGLPKCSHLKDLKKLNLSKMQLDLKDLDQKLFSQMVNLDELDISHNTLSDLPGNLRLHNLRILNFADNHVEDVTVLKQFPNLEEVIYEDNIYLTVSDNYKVFCLLPKLRRLNNKDITSLANHVRFVNHRELSNRVEAYWESKYKDKLPDKPPSQKINAVAKDFIKAVVDNVRYGPSSLKDFVRWKVEMIARNLIFSLSNDPKKDTDPVLQTSEDTAVENSSKKRESADECTEGSPTKRPRIQIDLQSMPLSPRKSSRLQNSPLCLTPTKRKQETSAQGTPSKFIETKSPKIALKTTPSKKHTNELSAKITGKPKLPLTPKKIHKALDNIEPLHFLQCHSKNNSCEDFKTQLWACAFEPNLDSSCPKAVATCGGDSICIIDCETGKVMKKYKVTGEEFFTLVWTTLTMIGKDGQKRKINVLAAGGKYGVVRMIHAKGSLCYGEIKAHKKAISIMCFSPKQETFLFTGSYDKRIILWDIGVPDCDYNFRPSQLLTLDTTSVPLRMCVVPSCPDEFLVAACEDGCFAWDIGLDKKQGRRSHEVEFNFPLYKEERKDKCFHIIDSLAFLNEDIIASKSVMQGSIYLWSWEKTLKSRKNKNVKKLDAVILSQMKWSSSETPYLVLSTSPERDCVFCGDEDGKIWIYDLDSCKADLQRGKLCSTVKEPTKILSWPLLCSQKEKTVDKTLINVVTVDPTMEYLVALTDINIVSIWKIQ</sequence>
<dbReference type="EMBL" id="BC074207">
    <property type="protein sequence ID" value="AAH74207.1"/>
    <property type="molecule type" value="mRNA"/>
</dbReference>
<dbReference type="RefSeq" id="NP_001086115.1">
    <property type="nucleotide sequence ID" value="NM_001092646.1"/>
</dbReference>
<dbReference type="SMR" id="Q6GM71"/>
<dbReference type="DNASU" id="444544"/>
<dbReference type="GeneID" id="444544"/>
<dbReference type="KEGG" id="xla:444544"/>
<dbReference type="AGR" id="Xenbase:XB-GENE-959485"/>
<dbReference type="CTD" id="444544"/>
<dbReference type="Xenbase" id="XB-GENE-959485">
    <property type="gene designation" value="lrwd1.L"/>
</dbReference>
<dbReference type="OrthoDB" id="7318948at2759"/>
<dbReference type="Proteomes" id="UP000186698">
    <property type="component" value="Chromosome 2L"/>
</dbReference>
<dbReference type="Bgee" id="444544">
    <property type="expression patterns" value="Expressed in gastrula and 19 other cell types or tissues"/>
</dbReference>
<dbReference type="GO" id="GO:0005813">
    <property type="term" value="C:centrosome"/>
    <property type="evidence" value="ECO:0007669"/>
    <property type="project" value="UniProtKB-SubCell"/>
</dbReference>
<dbReference type="GO" id="GO:0000781">
    <property type="term" value="C:chromosome, telomeric region"/>
    <property type="evidence" value="ECO:0000250"/>
    <property type="project" value="UniProtKB"/>
</dbReference>
<dbReference type="GO" id="GO:0005737">
    <property type="term" value="C:cytoplasm"/>
    <property type="evidence" value="ECO:0007669"/>
    <property type="project" value="UniProtKB-KW"/>
</dbReference>
<dbReference type="GO" id="GO:0000776">
    <property type="term" value="C:kinetochore"/>
    <property type="evidence" value="ECO:0000250"/>
    <property type="project" value="UniProtKB"/>
</dbReference>
<dbReference type="GO" id="GO:0005664">
    <property type="term" value="C:nuclear origin of replication recognition complex"/>
    <property type="evidence" value="ECO:0000250"/>
    <property type="project" value="UniProtKB"/>
</dbReference>
<dbReference type="GO" id="GO:0005634">
    <property type="term" value="C:nucleus"/>
    <property type="evidence" value="ECO:0000250"/>
    <property type="project" value="UniProtKB"/>
</dbReference>
<dbReference type="GO" id="GO:0005721">
    <property type="term" value="C:pericentric heterochromatin"/>
    <property type="evidence" value="ECO:0000250"/>
    <property type="project" value="UniProtKB"/>
</dbReference>
<dbReference type="GO" id="GO:0003682">
    <property type="term" value="F:chromatin binding"/>
    <property type="evidence" value="ECO:0000250"/>
    <property type="project" value="UniProtKB"/>
</dbReference>
<dbReference type="GO" id="GO:0061628">
    <property type="term" value="F:histone H3K27me3 reader activity"/>
    <property type="evidence" value="ECO:0000250"/>
    <property type="project" value="UniProtKB"/>
</dbReference>
<dbReference type="GO" id="GO:0008327">
    <property type="term" value="F:methyl-CpG binding"/>
    <property type="evidence" value="ECO:0000250"/>
    <property type="project" value="UniProtKB"/>
</dbReference>
<dbReference type="GO" id="GO:0006325">
    <property type="term" value="P:chromatin organization"/>
    <property type="evidence" value="ECO:0000250"/>
    <property type="project" value="UniProtKB"/>
</dbReference>
<dbReference type="GO" id="GO:0006260">
    <property type="term" value="P:DNA replication"/>
    <property type="evidence" value="ECO:0007669"/>
    <property type="project" value="UniProtKB-KW"/>
</dbReference>
<dbReference type="GO" id="GO:0071169">
    <property type="term" value="P:establishment of protein localization to chromatin"/>
    <property type="evidence" value="ECO:0000250"/>
    <property type="project" value="UniProtKB"/>
</dbReference>
<dbReference type="FunFam" id="2.130.10.10:FF:000488">
    <property type="entry name" value="Leucine-rich repeat and WD repeat-containing protein 1"/>
    <property type="match status" value="1"/>
</dbReference>
<dbReference type="FunFam" id="3.80.10.10:FF:000429">
    <property type="entry name" value="Leucine-rich repeat and WD repeat-containing protein 1"/>
    <property type="match status" value="1"/>
</dbReference>
<dbReference type="Gene3D" id="3.80.10.10">
    <property type="entry name" value="Ribonuclease Inhibitor"/>
    <property type="match status" value="1"/>
</dbReference>
<dbReference type="Gene3D" id="2.130.10.10">
    <property type="entry name" value="YVTN repeat-like/Quinoprotein amine dehydrogenase"/>
    <property type="match status" value="1"/>
</dbReference>
<dbReference type="InterPro" id="IPR001611">
    <property type="entry name" value="Leu-rich_rpt"/>
</dbReference>
<dbReference type="InterPro" id="IPR032675">
    <property type="entry name" value="LRR_dom_sf"/>
</dbReference>
<dbReference type="InterPro" id="IPR056363">
    <property type="entry name" value="LRR_LRWD1_dom"/>
</dbReference>
<dbReference type="InterPro" id="IPR052489">
    <property type="entry name" value="LRWD1"/>
</dbReference>
<dbReference type="InterPro" id="IPR015943">
    <property type="entry name" value="WD40/YVTN_repeat-like_dom_sf"/>
</dbReference>
<dbReference type="InterPro" id="IPR019775">
    <property type="entry name" value="WD40_repeat_CS"/>
</dbReference>
<dbReference type="InterPro" id="IPR036322">
    <property type="entry name" value="WD40_repeat_dom_sf"/>
</dbReference>
<dbReference type="InterPro" id="IPR001680">
    <property type="entry name" value="WD40_rpt"/>
</dbReference>
<dbReference type="InterPro" id="IPR056160">
    <property type="entry name" value="WD_LRWD1"/>
</dbReference>
<dbReference type="PANTHER" id="PTHR24370:SF10">
    <property type="entry name" value="LEUCINE-RICH REPEAT AND WD REPEAT-CONTAINING PROTEIN 1"/>
    <property type="match status" value="1"/>
</dbReference>
<dbReference type="PANTHER" id="PTHR24370">
    <property type="entry name" value="OPTICIN"/>
    <property type="match status" value="1"/>
</dbReference>
<dbReference type="Pfam" id="PF23211">
    <property type="entry name" value="LRR_LRWD1"/>
    <property type="match status" value="1"/>
</dbReference>
<dbReference type="Pfam" id="PF23215">
    <property type="entry name" value="WD_LRWD1"/>
    <property type="match status" value="1"/>
</dbReference>
<dbReference type="SMART" id="SM00320">
    <property type="entry name" value="WD40"/>
    <property type="match status" value="4"/>
</dbReference>
<dbReference type="SUPFAM" id="SSF52058">
    <property type="entry name" value="L domain-like"/>
    <property type="match status" value="1"/>
</dbReference>
<dbReference type="SUPFAM" id="SSF50978">
    <property type="entry name" value="WD40 repeat-like"/>
    <property type="match status" value="1"/>
</dbReference>
<dbReference type="PROSITE" id="PS51450">
    <property type="entry name" value="LRR"/>
    <property type="match status" value="3"/>
</dbReference>
<dbReference type="PROSITE" id="PS00678">
    <property type="entry name" value="WD_REPEATS_1"/>
    <property type="match status" value="1"/>
</dbReference>
<dbReference type="PROSITE" id="PS50082">
    <property type="entry name" value="WD_REPEATS_2"/>
    <property type="match status" value="1"/>
</dbReference>
<dbReference type="PROSITE" id="PS50294">
    <property type="entry name" value="WD_REPEATS_REGION"/>
    <property type="match status" value="1"/>
</dbReference>
<proteinExistence type="evidence at transcript level"/>
<accession>Q6GM71</accession>
<feature type="chain" id="PRO_0000310996" description="Leucine-rich repeat and WD repeat-containing protein 1">
    <location>
        <begin position="1"/>
        <end position="722"/>
    </location>
</feature>
<feature type="repeat" description="LRR 1">
    <location>
        <begin position="22"/>
        <end position="42"/>
    </location>
</feature>
<feature type="repeat" description="LRR 2">
    <location>
        <begin position="48"/>
        <end position="69"/>
    </location>
</feature>
<feature type="repeat" description="LRR 3">
    <location>
        <begin position="70"/>
        <end position="91"/>
    </location>
</feature>
<feature type="repeat" description="WD 1">
    <location>
        <begin position="456"/>
        <end position="496"/>
    </location>
</feature>
<feature type="repeat" description="WD 2">
    <location>
        <begin position="506"/>
        <end position="546"/>
    </location>
</feature>
<feature type="repeat" description="WD 3">
    <location>
        <begin position="565"/>
        <end position="604"/>
    </location>
</feature>
<feature type="repeat" description="WD 4">
    <location>
        <begin position="623"/>
        <end position="662"/>
    </location>
</feature>
<feature type="repeat" description="WD 5">
    <location>
        <begin position="690"/>
        <end position="722"/>
    </location>
</feature>
<feature type="region of interest" description="Disordered" evidence="4">
    <location>
        <begin position="211"/>
        <end position="292"/>
    </location>
</feature>
<feature type="compositionally biased region" description="Polar residues" evidence="4">
    <location>
        <begin position="219"/>
        <end position="230"/>
    </location>
</feature>
<reference key="1">
    <citation type="submission" date="2004-06" db="EMBL/GenBank/DDBJ databases">
        <authorList>
            <consortium name="NIH - Xenopus Gene Collection (XGC) project"/>
        </authorList>
    </citation>
    <scope>NUCLEOTIDE SEQUENCE [LARGE SCALE MRNA]</scope>
    <source>
        <tissue>Kidney</tissue>
    </source>
</reference>
<keyword id="KW-0137">Centromere</keyword>
<keyword id="KW-0156">Chromatin regulator</keyword>
<keyword id="KW-0158">Chromosome</keyword>
<keyword id="KW-0963">Cytoplasm</keyword>
<keyword id="KW-0206">Cytoskeleton</keyword>
<keyword id="KW-0235">DNA replication</keyword>
<keyword id="KW-0995">Kinetochore</keyword>
<keyword id="KW-0433">Leucine-rich repeat</keyword>
<keyword id="KW-0539">Nucleus</keyword>
<keyword id="KW-1185">Reference proteome</keyword>
<keyword id="KW-0677">Repeat</keyword>
<keyword id="KW-0779">Telomere</keyword>
<keyword id="KW-0853">WD repeat</keyword>
<evidence type="ECO:0000250" key="1"/>
<evidence type="ECO:0000250" key="2">
    <source>
        <dbReference type="UniProtKB" id="Q8BUI3"/>
    </source>
</evidence>
<evidence type="ECO:0000250" key="3">
    <source>
        <dbReference type="UniProtKB" id="Q9UFC0"/>
    </source>
</evidence>
<evidence type="ECO:0000256" key="4">
    <source>
        <dbReference type="SAM" id="MobiDB-lite"/>
    </source>
</evidence>
<evidence type="ECO:0000305" key="5"/>
<protein>
    <recommendedName>
        <fullName>Leucine-rich repeat and WD repeat-containing protein 1</fullName>
    </recommendedName>
    <alternativeName>
        <fullName>ORC-associated protein</fullName>
        <shortName>ORCA</shortName>
    </alternativeName>
    <alternativeName>
        <fullName>Origin recognition complex-associated protein</fullName>
    </alternativeName>
</protein>
<gene>
    <name type="primary">lrwd1</name>
    <name type="synonym">orca</name>
</gene>
<comment type="function">
    <text evidence="1">Required for G1/S transition. Recruits and stabilizes the origin recognition complex (ORC) onto chromatin during G1 to establish pre-replication complex (preRC) and to heterochromatic sites in post-replicated cells. Binds a combination of DNA and histone methylation repressive marks on heterochromatin. Required for silencing of major satellite repeats. May be important ORC2, ORC3 and ORC4 stability (By similarity).</text>
</comment>
<comment type="subunit">
    <text evidence="1">Component of the ORC complex.</text>
</comment>
<comment type="subcellular location">
    <subcellularLocation>
        <location evidence="3">Nucleus</location>
    </subcellularLocation>
    <subcellularLocation>
        <location evidence="3">Chromosome</location>
        <location evidence="3">Centromere</location>
    </subcellularLocation>
    <subcellularLocation>
        <location evidence="3">Chromosome</location>
        <location evidence="3">Telomere</location>
    </subcellularLocation>
    <subcellularLocation>
        <location evidence="2">Cytoplasm</location>
        <location evidence="2">Cytoskeleton</location>
        <location evidence="2">Microtubule organizing center</location>
        <location evidence="2">Centrosome</location>
    </subcellularLocation>
    <subcellularLocation>
        <location evidence="3">Chromosome</location>
        <location evidence="3">Centromere</location>
        <location evidence="3">Kinetochore</location>
    </subcellularLocation>
</comment>
<comment type="domain">
    <text evidence="1">The entire WD repeat region is required for the interaction with ORC complex components, as well as for association with chromatin and for binding to histone methylation marks.</text>
</comment>
<comment type="similarity">
    <text evidence="5">Belongs to the LRWD1 family.</text>
</comment>
<name>LRWD1_XENLA</name>